<reference key="1">
    <citation type="journal article" date="2009" name="Genome Res.">
        <title>Newly introduced genomic prophage islands are critical determinants of in vivo competitiveness in the Liverpool epidemic strain of Pseudomonas aeruginosa.</title>
        <authorList>
            <person name="Winstanley C."/>
            <person name="Langille M.G.I."/>
            <person name="Fothergill J.L."/>
            <person name="Kukavica-Ibrulj I."/>
            <person name="Paradis-Bleau C."/>
            <person name="Sanschagrin F."/>
            <person name="Thomson N.R."/>
            <person name="Winsor G.L."/>
            <person name="Quail M.A."/>
            <person name="Lennard N."/>
            <person name="Bignell A."/>
            <person name="Clarke L."/>
            <person name="Seeger K."/>
            <person name="Saunders D."/>
            <person name="Harris D."/>
            <person name="Parkhill J."/>
            <person name="Hancock R.E.W."/>
            <person name="Brinkman F.S.L."/>
            <person name="Levesque R.C."/>
        </authorList>
    </citation>
    <scope>NUCLEOTIDE SEQUENCE [LARGE SCALE GENOMIC DNA]</scope>
    <source>
        <strain>LESB58</strain>
    </source>
</reference>
<sequence>MAHKKAGGSTRNGRDSESKRLGVKLFGGQAVKAGNILVRQRGTKFHAGYGVGLGKDHTLFAKVDGVVKFETKGAFGRKYVSIVAA</sequence>
<proteinExistence type="inferred from homology"/>
<feature type="chain" id="PRO_1000128793" description="Large ribosomal subunit protein bL27">
    <location>
        <begin position="1"/>
        <end position="85"/>
    </location>
</feature>
<keyword id="KW-0687">Ribonucleoprotein</keyword>
<keyword id="KW-0689">Ribosomal protein</keyword>
<organism>
    <name type="scientific">Pseudomonas aeruginosa (strain LESB58)</name>
    <dbReference type="NCBI Taxonomy" id="557722"/>
    <lineage>
        <taxon>Bacteria</taxon>
        <taxon>Pseudomonadati</taxon>
        <taxon>Pseudomonadota</taxon>
        <taxon>Gammaproteobacteria</taxon>
        <taxon>Pseudomonadales</taxon>
        <taxon>Pseudomonadaceae</taxon>
        <taxon>Pseudomonas</taxon>
    </lineage>
</organism>
<comment type="similarity">
    <text evidence="1">Belongs to the bacterial ribosomal protein bL27 family.</text>
</comment>
<dbReference type="EMBL" id="FM209186">
    <property type="protein sequence ID" value="CAW29704.1"/>
    <property type="molecule type" value="Genomic_DNA"/>
</dbReference>
<dbReference type="RefSeq" id="WP_003094760.1">
    <property type="nucleotide sequence ID" value="NC_011770.1"/>
</dbReference>
<dbReference type="SMR" id="B7V0B0"/>
<dbReference type="GeneID" id="77223074"/>
<dbReference type="KEGG" id="pag:PLES_49501"/>
<dbReference type="HOGENOM" id="CLU_095424_4_1_6"/>
<dbReference type="GO" id="GO:0022625">
    <property type="term" value="C:cytosolic large ribosomal subunit"/>
    <property type="evidence" value="ECO:0007669"/>
    <property type="project" value="TreeGrafter"/>
</dbReference>
<dbReference type="GO" id="GO:0003735">
    <property type="term" value="F:structural constituent of ribosome"/>
    <property type="evidence" value="ECO:0007669"/>
    <property type="project" value="InterPro"/>
</dbReference>
<dbReference type="GO" id="GO:0006412">
    <property type="term" value="P:translation"/>
    <property type="evidence" value="ECO:0007669"/>
    <property type="project" value="UniProtKB-UniRule"/>
</dbReference>
<dbReference type="FunFam" id="2.40.50.100:FF:000001">
    <property type="entry name" value="50S ribosomal protein L27"/>
    <property type="match status" value="1"/>
</dbReference>
<dbReference type="Gene3D" id="2.40.50.100">
    <property type="match status" value="1"/>
</dbReference>
<dbReference type="HAMAP" id="MF_00539">
    <property type="entry name" value="Ribosomal_bL27"/>
    <property type="match status" value="1"/>
</dbReference>
<dbReference type="InterPro" id="IPR001684">
    <property type="entry name" value="Ribosomal_bL27"/>
</dbReference>
<dbReference type="InterPro" id="IPR018261">
    <property type="entry name" value="Ribosomal_bL27_CS"/>
</dbReference>
<dbReference type="NCBIfam" id="TIGR00062">
    <property type="entry name" value="L27"/>
    <property type="match status" value="1"/>
</dbReference>
<dbReference type="PANTHER" id="PTHR15893:SF0">
    <property type="entry name" value="LARGE RIBOSOMAL SUBUNIT PROTEIN BL27M"/>
    <property type="match status" value="1"/>
</dbReference>
<dbReference type="PANTHER" id="PTHR15893">
    <property type="entry name" value="RIBOSOMAL PROTEIN L27"/>
    <property type="match status" value="1"/>
</dbReference>
<dbReference type="Pfam" id="PF01016">
    <property type="entry name" value="Ribosomal_L27"/>
    <property type="match status" value="1"/>
</dbReference>
<dbReference type="PRINTS" id="PR00063">
    <property type="entry name" value="RIBOSOMALL27"/>
</dbReference>
<dbReference type="SUPFAM" id="SSF110324">
    <property type="entry name" value="Ribosomal L27 protein-like"/>
    <property type="match status" value="1"/>
</dbReference>
<dbReference type="PROSITE" id="PS00831">
    <property type="entry name" value="RIBOSOMAL_L27"/>
    <property type="match status" value="1"/>
</dbReference>
<accession>B7V0B0</accession>
<protein>
    <recommendedName>
        <fullName evidence="1">Large ribosomal subunit protein bL27</fullName>
    </recommendedName>
    <alternativeName>
        <fullName evidence="2">50S ribosomal protein L27</fullName>
    </alternativeName>
</protein>
<gene>
    <name evidence="1" type="primary">rpmA</name>
    <name type="ordered locus">PLES_49501</name>
</gene>
<evidence type="ECO:0000255" key="1">
    <source>
        <dbReference type="HAMAP-Rule" id="MF_00539"/>
    </source>
</evidence>
<evidence type="ECO:0000305" key="2"/>
<name>RL27_PSEA8</name>